<feature type="chain" id="PRO_0000187172" description="2-dehydro-3-deoxyphosphooctonate aldolase">
    <location>
        <begin position="1"/>
        <end position="263"/>
    </location>
</feature>
<gene>
    <name evidence="1" type="primary">kdsA</name>
    <name type="ordered locus">WS0294</name>
</gene>
<proteinExistence type="inferred from homology"/>
<reference key="1">
    <citation type="journal article" date="2003" name="Proc. Natl. Acad. Sci. U.S.A.">
        <title>Complete genome sequence and analysis of Wolinella succinogenes.</title>
        <authorList>
            <person name="Baar C."/>
            <person name="Eppinger M."/>
            <person name="Raddatz G."/>
            <person name="Simon J."/>
            <person name="Lanz C."/>
            <person name="Klimmek O."/>
            <person name="Nandakumar R."/>
            <person name="Gross R."/>
            <person name="Rosinus A."/>
            <person name="Keller H."/>
            <person name="Jagtap P."/>
            <person name="Linke B."/>
            <person name="Meyer F."/>
            <person name="Lederer H."/>
            <person name="Schuster S.C."/>
        </authorList>
    </citation>
    <scope>NUCLEOTIDE SEQUENCE [LARGE SCALE GENOMIC DNA]</scope>
    <source>
        <strain>ATCC 29543 / DSM 1740 / CCUG 13145 / JCM 31913 / LMG 7466 / NCTC 11488 / FDC 602W</strain>
    </source>
</reference>
<accession>Q7MAF1</accession>
<comment type="catalytic activity">
    <reaction evidence="1">
        <text>D-arabinose 5-phosphate + phosphoenolpyruvate + H2O = 3-deoxy-alpha-D-manno-2-octulosonate-8-phosphate + phosphate</text>
        <dbReference type="Rhea" id="RHEA:14053"/>
        <dbReference type="ChEBI" id="CHEBI:15377"/>
        <dbReference type="ChEBI" id="CHEBI:43474"/>
        <dbReference type="ChEBI" id="CHEBI:57693"/>
        <dbReference type="ChEBI" id="CHEBI:58702"/>
        <dbReference type="ChEBI" id="CHEBI:85985"/>
        <dbReference type="EC" id="2.5.1.55"/>
    </reaction>
</comment>
<comment type="pathway">
    <text evidence="1">Carbohydrate biosynthesis; 3-deoxy-D-manno-octulosonate biosynthesis; 3-deoxy-D-manno-octulosonate from D-ribulose 5-phosphate: step 2/3.</text>
</comment>
<comment type="pathway">
    <text evidence="1">Bacterial outer membrane biogenesis; lipopolysaccharide biosynthesis.</text>
</comment>
<comment type="subcellular location">
    <subcellularLocation>
        <location evidence="1">Cytoplasm</location>
    </subcellularLocation>
</comment>
<comment type="similarity">
    <text evidence="1">Belongs to the KdsA family.</text>
</comment>
<name>KDSA_WOLSU</name>
<sequence length="263" mass="28660">MILIAGPCVIESQEMLRKIASELQPLSEDARIDFYFKASFDKANRTSLESYRGPGLEKGLEMLGRIKEEFGYKLLTDIHETQQVAKAAQVVDILQIPAFLCRQTDLIVEAAKSQSIVNIKKGQFMNPADMSHSVLKAIKTRGGSEASYEEAKRLGIWLTERGSSFGYGNLVVDMRSLMIMRQFAPVIFDATHAVQMPGAAGGKSGGDSRFVAPLSRAAAAVGVDGFFTETHVSPKEALSDGPNMITPQALKVLVHQLLALSEI</sequence>
<protein>
    <recommendedName>
        <fullName evidence="1">2-dehydro-3-deoxyphosphooctonate aldolase</fullName>
        <ecNumber evidence="1">2.5.1.55</ecNumber>
    </recommendedName>
    <alternativeName>
        <fullName evidence="1">3-deoxy-D-manno-octulosonic acid 8-phosphate synthase</fullName>
    </alternativeName>
    <alternativeName>
        <fullName evidence="1">KDO-8-phosphate synthase</fullName>
        <shortName evidence="1">KDO 8-P synthase</shortName>
        <shortName evidence="1">KDOPS</shortName>
    </alternativeName>
    <alternativeName>
        <fullName evidence="1">Phospho-2-dehydro-3-deoxyoctonate aldolase</fullName>
    </alternativeName>
</protein>
<evidence type="ECO:0000255" key="1">
    <source>
        <dbReference type="HAMAP-Rule" id="MF_00056"/>
    </source>
</evidence>
<keyword id="KW-0963">Cytoplasm</keyword>
<keyword id="KW-0448">Lipopolysaccharide biosynthesis</keyword>
<keyword id="KW-1185">Reference proteome</keyword>
<keyword id="KW-0808">Transferase</keyword>
<organism>
    <name type="scientific">Wolinella succinogenes (strain ATCC 29543 / DSM 1740 / CCUG 13145 / JCM 31913 / LMG 7466 / NCTC 11488 / FDC 602W)</name>
    <name type="common">Vibrio succinogenes</name>
    <dbReference type="NCBI Taxonomy" id="273121"/>
    <lineage>
        <taxon>Bacteria</taxon>
        <taxon>Pseudomonadati</taxon>
        <taxon>Campylobacterota</taxon>
        <taxon>Epsilonproteobacteria</taxon>
        <taxon>Campylobacterales</taxon>
        <taxon>Helicobacteraceae</taxon>
        <taxon>Wolinella</taxon>
    </lineage>
</organism>
<dbReference type="EC" id="2.5.1.55" evidence="1"/>
<dbReference type="EMBL" id="BX571657">
    <property type="protein sequence ID" value="CAE09445.1"/>
    <property type="molecule type" value="Genomic_DNA"/>
</dbReference>
<dbReference type="RefSeq" id="WP_011138246.1">
    <property type="nucleotide sequence ID" value="NC_005090.1"/>
</dbReference>
<dbReference type="SMR" id="Q7MAF1"/>
<dbReference type="STRING" id="273121.WS0294"/>
<dbReference type="KEGG" id="wsu:WS0294"/>
<dbReference type="eggNOG" id="COG2877">
    <property type="taxonomic scope" value="Bacteria"/>
</dbReference>
<dbReference type="HOGENOM" id="CLU_036666_0_0_7"/>
<dbReference type="UniPathway" id="UPA00030"/>
<dbReference type="UniPathway" id="UPA00357">
    <property type="reaction ID" value="UER00474"/>
</dbReference>
<dbReference type="Proteomes" id="UP000000422">
    <property type="component" value="Chromosome"/>
</dbReference>
<dbReference type="GO" id="GO:0005737">
    <property type="term" value="C:cytoplasm"/>
    <property type="evidence" value="ECO:0007669"/>
    <property type="project" value="UniProtKB-SubCell"/>
</dbReference>
<dbReference type="GO" id="GO:0008676">
    <property type="term" value="F:3-deoxy-8-phosphooctulonate synthase activity"/>
    <property type="evidence" value="ECO:0007669"/>
    <property type="project" value="UniProtKB-UniRule"/>
</dbReference>
<dbReference type="GO" id="GO:0019294">
    <property type="term" value="P:keto-3-deoxy-D-manno-octulosonic acid biosynthetic process"/>
    <property type="evidence" value="ECO:0007669"/>
    <property type="project" value="UniProtKB-UniRule"/>
</dbReference>
<dbReference type="Gene3D" id="3.20.20.70">
    <property type="entry name" value="Aldolase class I"/>
    <property type="match status" value="1"/>
</dbReference>
<dbReference type="HAMAP" id="MF_00056">
    <property type="entry name" value="KDO8P_synth"/>
    <property type="match status" value="1"/>
</dbReference>
<dbReference type="InterPro" id="IPR013785">
    <property type="entry name" value="Aldolase_TIM"/>
</dbReference>
<dbReference type="InterPro" id="IPR006218">
    <property type="entry name" value="DAHP1/KDSA"/>
</dbReference>
<dbReference type="InterPro" id="IPR006269">
    <property type="entry name" value="KDO8P_synthase"/>
</dbReference>
<dbReference type="NCBIfam" id="TIGR01362">
    <property type="entry name" value="KDO8P_synth"/>
    <property type="match status" value="1"/>
</dbReference>
<dbReference type="NCBIfam" id="NF003543">
    <property type="entry name" value="PRK05198.1"/>
    <property type="match status" value="1"/>
</dbReference>
<dbReference type="PANTHER" id="PTHR21057">
    <property type="entry name" value="PHOSPHO-2-DEHYDRO-3-DEOXYHEPTONATE ALDOLASE"/>
    <property type="match status" value="1"/>
</dbReference>
<dbReference type="Pfam" id="PF00793">
    <property type="entry name" value="DAHP_synth_1"/>
    <property type="match status" value="1"/>
</dbReference>
<dbReference type="SUPFAM" id="SSF51569">
    <property type="entry name" value="Aldolase"/>
    <property type="match status" value="1"/>
</dbReference>